<reference key="1">
    <citation type="journal article" date="2000" name="Nature">
        <title>The genome sequence of the thermoacidophilic scavenger Thermoplasma acidophilum.</title>
        <authorList>
            <person name="Ruepp A."/>
            <person name="Graml W."/>
            <person name="Santos-Martinez M.-L."/>
            <person name="Koretke K.K."/>
            <person name="Volker C."/>
            <person name="Mewes H.-W."/>
            <person name="Frishman D."/>
            <person name="Stocker S."/>
            <person name="Lupas A.N."/>
            <person name="Baumeister W."/>
        </authorList>
    </citation>
    <scope>NUCLEOTIDE SEQUENCE [LARGE SCALE GENOMIC DNA]</scope>
    <source>
        <strain>ATCC 25905 / DSM 1728 / JCM 9062 / NBRC 15155 / AMRC-C165</strain>
    </source>
</reference>
<organism>
    <name type="scientific">Thermoplasma acidophilum (strain ATCC 25905 / DSM 1728 / JCM 9062 / NBRC 15155 / AMRC-C165)</name>
    <dbReference type="NCBI Taxonomy" id="273075"/>
    <lineage>
        <taxon>Archaea</taxon>
        <taxon>Methanobacteriati</taxon>
        <taxon>Thermoplasmatota</taxon>
        <taxon>Thermoplasmata</taxon>
        <taxon>Thermoplasmatales</taxon>
        <taxon>Thermoplasmataceae</taxon>
        <taxon>Thermoplasma</taxon>
    </lineage>
</organism>
<accession>Q9HKF1</accession>
<protein>
    <recommendedName>
        <fullName evidence="1">Argininosuccinate synthase</fullName>
        <ecNumber evidence="1">6.3.4.5</ecNumber>
    </recommendedName>
    <alternativeName>
        <fullName evidence="1">Citrulline--aspartate ligase</fullName>
    </alternativeName>
</protein>
<gene>
    <name evidence="1" type="primary">argG</name>
    <name type="ordered locus">Ta0650</name>
</gene>
<proteinExistence type="inferred from homology"/>
<keyword id="KW-0028">Amino-acid biosynthesis</keyword>
<keyword id="KW-0055">Arginine biosynthesis</keyword>
<keyword id="KW-0067">ATP-binding</keyword>
<keyword id="KW-0963">Cytoplasm</keyword>
<keyword id="KW-0436">Ligase</keyword>
<keyword id="KW-0547">Nucleotide-binding</keyword>
<keyword id="KW-1185">Reference proteome</keyword>
<comment type="catalytic activity">
    <reaction evidence="1">
        <text>L-citrulline + L-aspartate + ATP = 2-(N(omega)-L-arginino)succinate + AMP + diphosphate + H(+)</text>
        <dbReference type="Rhea" id="RHEA:10932"/>
        <dbReference type="ChEBI" id="CHEBI:15378"/>
        <dbReference type="ChEBI" id="CHEBI:29991"/>
        <dbReference type="ChEBI" id="CHEBI:30616"/>
        <dbReference type="ChEBI" id="CHEBI:33019"/>
        <dbReference type="ChEBI" id="CHEBI:57472"/>
        <dbReference type="ChEBI" id="CHEBI:57743"/>
        <dbReference type="ChEBI" id="CHEBI:456215"/>
        <dbReference type="EC" id="6.3.4.5"/>
    </reaction>
</comment>
<comment type="pathway">
    <text evidence="1">Amino-acid biosynthesis; L-arginine biosynthesis; L-arginine from L-ornithine and carbamoyl phosphate: step 2/3.</text>
</comment>
<comment type="subunit">
    <text evidence="1">Homotetramer.</text>
</comment>
<comment type="subcellular location">
    <subcellularLocation>
        <location evidence="1">Cytoplasm</location>
    </subcellularLocation>
</comment>
<comment type="similarity">
    <text evidence="1">Belongs to the argininosuccinate synthase family. Type 1 subfamily.</text>
</comment>
<comment type="sequence caution" evidence="2">
    <conflict type="erroneous initiation">
        <sequence resource="EMBL-CDS" id="CAC11788"/>
    </conflict>
</comment>
<evidence type="ECO:0000255" key="1">
    <source>
        <dbReference type="HAMAP-Rule" id="MF_00005"/>
    </source>
</evidence>
<evidence type="ECO:0000305" key="2"/>
<dbReference type="EC" id="6.3.4.5" evidence="1"/>
<dbReference type="EMBL" id="AL445065">
    <property type="protein sequence ID" value="CAC11788.1"/>
    <property type="status" value="ALT_INIT"/>
    <property type="molecule type" value="Genomic_DNA"/>
</dbReference>
<dbReference type="RefSeq" id="WP_048161692.1">
    <property type="nucleotide sequence ID" value="NC_002578.1"/>
</dbReference>
<dbReference type="SMR" id="Q9HKF1"/>
<dbReference type="FunCoup" id="Q9HKF1">
    <property type="interactions" value="176"/>
</dbReference>
<dbReference type="STRING" id="273075.gene:9571870"/>
<dbReference type="PaxDb" id="273075-Ta0650"/>
<dbReference type="EnsemblBacteria" id="CAC11788">
    <property type="protein sequence ID" value="CAC11788"/>
    <property type="gene ID" value="CAC11788"/>
</dbReference>
<dbReference type="KEGG" id="tac:Ta0650"/>
<dbReference type="eggNOG" id="arCOG00112">
    <property type="taxonomic scope" value="Archaea"/>
</dbReference>
<dbReference type="HOGENOM" id="CLU_032784_4_0_2"/>
<dbReference type="InParanoid" id="Q9HKF1"/>
<dbReference type="OrthoDB" id="5877at2157"/>
<dbReference type="UniPathway" id="UPA00068">
    <property type="reaction ID" value="UER00113"/>
</dbReference>
<dbReference type="Proteomes" id="UP000001024">
    <property type="component" value="Chromosome"/>
</dbReference>
<dbReference type="GO" id="GO:0005737">
    <property type="term" value="C:cytoplasm"/>
    <property type="evidence" value="ECO:0007669"/>
    <property type="project" value="UniProtKB-SubCell"/>
</dbReference>
<dbReference type="GO" id="GO:0004055">
    <property type="term" value="F:argininosuccinate synthase activity"/>
    <property type="evidence" value="ECO:0007669"/>
    <property type="project" value="UniProtKB-UniRule"/>
</dbReference>
<dbReference type="GO" id="GO:0005524">
    <property type="term" value="F:ATP binding"/>
    <property type="evidence" value="ECO:0007669"/>
    <property type="project" value="UniProtKB-UniRule"/>
</dbReference>
<dbReference type="GO" id="GO:0000053">
    <property type="term" value="P:argininosuccinate metabolic process"/>
    <property type="evidence" value="ECO:0007669"/>
    <property type="project" value="TreeGrafter"/>
</dbReference>
<dbReference type="GO" id="GO:0006526">
    <property type="term" value="P:L-arginine biosynthetic process"/>
    <property type="evidence" value="ECO:0007669"/>
    <property type="project" value="UniProtKB-UniRule"/>
</dbReference>
<dbReference type="GO" id="GO:0000050">
    <property type="term" value="P:urea cycle"/>
    <property type="evidence" value="ECO:0007669"/>
    <property type="project" value="TreeGrafter"/>
</dbReference>
<dbReference type="CDD" id="cd01999">
    <property type="entry name" value="ASS"/>
    <property type="match status" value="1"/>
</dbReference>
<dbReference type="FunFam" id="3.40.50.620:FF:000019">
    <property type="entry name" value="Argininosuccinate synthase"/>
    <property type="match status" value="1"/>
</dbReference>
<dbReference type="FunFam" id="3.90.1260.10:FF:000007">
    <property type="entry name" value="Argininosuccinate synthase"/>
    <property type="match status" value="1"/>
</dbReference>
<dbReference type="Gene3D" id="3.90.1260.10">
    <property type="entry name" value="Argininosuccinate synthetase, chain A, domain 2"/>
    <property type="match status" value="1"/>
</dbReference>
<dbReference type="Gene3D" id="3.40.50.620">
    <property type="entry name" value="HUPs"/>
    <property type="match status" value="1"/>
</dbReference>
<dbReference type="HAMAP" id="MF_00005">
    <property type="entry name" value="Arg_succ_synth_type1"/>
    <property type="match status" value="1"/>
</dbReference>
<dbReference type="InterPro" id="IPR048268">
    <property type="entry name" value="Arginosuc_syn_C"/>
</dbReference>
<dbReference type="InterPro" id="IPR048267">
    <property type="entry name" value="Arginosuc_syn_N"/>
</dbReference>
<dbReference type="InterPro" id="IPR001518">
    <property type="entry name" value="Arginosuc_synth"/>
</dbReference>
<dbReference type="InterPro" id="IPR018223">
    <property type="entry name" value="Arginosuc_synth_CS"/>
</dbReference>
<dbReference type="InterPro" id="IPR023434">
    <property type="entry name" value="Arginosuc_synth_type_1_subfam"/>
</dbReference>
<dbReference type="InterPro" id="IPR024074">
    <property type="entry name" value="AS_cat/multimer_dom_body"/>
</dbReference>
<dbReference type="InterPro" id="IPR014729">
    <property type="entry name" value="Rossmann-like_a/b/a_fold"/>
</dbReference>
<dbReference type="NCBIfam" id="TIGR00032">
    <property type="entry name" value="argG"/>
    <property type="match status" value="1"/>
</dbReference>
<dbReference type="NCBIfam" id="NF001770">
    <property type="entry name" value="PRK00509.1"/>
    <property type="match status" value="1"/>
</dbReference>
<dbReference type="PANTHER" id="PTHR11587">
    <property type="entry name" value="ARGININOSUCCINATE SYNTHASE"/>
    <property type="match status" value="1"/>
</dbReference>
<dbReference type="PANTHER" id="PTHR11587:SF2">
    <property type="entry name" value="ARGININOSUCCINATE SYNTHASE"/>
    <property type="match status" value="1"/>
</dbReference>
<dbReference type="Pfam" id="PF20979">
    <property type="entry name" value="Arginosuc_syn_C"/>
    <property type="match status" value="1"/>
</dbReference>
<dbReference type="Pfam" id="PF00764">
    <property type="entry name" value="Arginosuc_synth"/>
    <property type="match status" value="1"/>
</dbReference>
<dbReference type="SUPFAM" id="SSF52402">
    <property type="entry name" value="Adenine nucleotide alpha hydrolases-like"/>
    <property type="match status" value="1"/>
</dbReference>
<dbReference type="SUPFAM" id="SSF69864">
    <property type="entry name" value="Argininosuccinate synthetase, C-terminal domain"/>
    <property type="match status" value="1"/>
</dbReference>
<dbReference type="PROSITE" id="PS00564">
    <property type="entry name" value="ARGININOSUCCIN_SYN_1"/>
    <property type="match status" value="1"/>
</dbReference>
<dbReference type="PROSITE" id="PS00565">
    <property type="entry name" value="ARGININOSUCCIN_SYN_2"/>
    <property type="match status" value="1"/>
</dbReference>
<sequence length="402" mass="44813">MDKALLLYSGGLDTSVMIKWIQENLSMDVATLTLNVGNSDLVAIEEKARMLGADPVFVHDAKDEFAEKFIAKSIMANGSYEGYPLSTALARPLMAEKAVKYAQKIGAKYIVHGSTGRGNDQVRFEVSIRALDPSMQVLVPVREWNMMRKDEVEYAKTHGIPVKLDGKYSIDENIWGRSVEGPDLEDIGKGVPEDVYEWVVPPWKANAEHTLKIAFDGGIPSEIDGEKMKLADLIVFLNTLAGSSGIGLIDHMENRVVGLKSHEVYECPAATVITHAHRYLESLILNRNEAEVKMNMDWQFAKFVYGGLWHDPVMNAVNAAEAEFNRDISGEIKIRMSHGIMYIEGAWGNSFLYSKDLINYSSMAFDQRASKGFIDIYGNATVHSHNRNPKMVKEVQGSSVEF</sequence>
<feature type="chain" id="PRO_0000148688" description="Argininosuccinate synthase">
    <location>
        <begin position="1"/>
        <end position="402"/>
    </location>
</feature>
<feature type="binding site" evidence="1">
    <location>
        <begin position="7"/>
        <end position="15"/>
    </location>
    <ligand>
        <name>ATP</name>
        <dbReference type="ChEBI" id="CHEBI:30616"/>
    </ligand>
</feature>
<feature type="binding site" evidence="1">
    <location>
        <position position="83"/>
    </location>
    <ligand>
        <name>L-citrulline</name>
        <dbReference type="ChEBI" id="CHEBI:57743"/>
    </ligand>
</feature>
<feature type="binding site" evidence="1">
    <location>
        <position position="113"/>
    </location>
    <ligand>
        <name>ATP</name>
        <dbReference type="ChEBI" id="CHEBI:30616"/>
    </ligand>
</feature>
<feature type="binding site" evidence="1">
    <location>
        <position position="115"/>
    </location>
    <ligand>
        <name>L-aspartate</name>
        <dbReference type="ChEBI" id="CHEBI:29991"/>
    </ligand>
</feature>
<feature type="binding site" evidence="1">
    <location>
        <position position="119"/>
    </location>
    <ligand>
        <name>L-aspartate</name>
        <dbReference type="ChEBI" id="CHEBI:29991"/>
    </ligand>
</feature>
<feature type="binding site" evidence="1">
    <location>
        <position position="119"/>
    </location>
    <ligand>
        <name>L-citrulline</name>
        <dbReference type="ChEBI" id="CHEBI:57743"/>
    </ligand>
</feature>
<feature type="binding site" evidence="1">
    <location>
        <position position="120"/>
    </location>
    <ligand>
        <name>L-aspartate</name>
        <dbReference type="ChEBI" id="CHEBI:29991"/>
    </ligand>
</feature>
<feature type="binding site" evidence="1">
    <location>
        <position position="123"/>
    </location>
    <ligand>
        <name>L-citrulline</name>
        <dbReference type="ChEBI" id="CHEBI:57743"/>
    </ligand>
</feature>
<feature type="binding site" evidence="1">
    <location>
        <position position="169"/>
    </location>
    <ligand>
        <name>L-citrulline</name>
        <dbReference type="ChEBI" id="CHEBI:57743"/>
    </ligand>
</feature>
<feature type="binding site" evidence="1">
    <location>
        <position position="178"/>
    </location>
    <ligand>
        <name>L-citrulline</name>
        <dbReference type="ChEBI" id="CHEBI:57743"/>
    </ligand>
</feature>
<feature type="binding site" evidence="1">
    <location>
        <position position="253"/>
    </location>
    <ligand>
        <name>L-citrulline</name>
        <dbReference type="ChEBI" id="CHEBI:57743"/>
    </ligand>
</feature>
<feature type="binding site" evidence="1">
    <location>
        <position position="265"/>
    </location>
    <ligand>
        <name>L-citrulline</name>
        <dbReference type="ChEBI" id="CHEBI:57743"/>
    </ligand>
</feature>
<name>ASSY_THEAC</name>